<comment type="function">
    <text evidence="1">E3 ubiquitin-protein ligase which accepts ubiquitin from an E2 ubiquitin-conjugating enzyme in the form of a thioester and then directly transfers the ubiquitin to targeted substrates. Catalyzes monoubiquitination of 26S proteasome subunit PSMC2/RPT1.</text>
</comment>
<comment type="catalytic activity">
    <reaction evidence="1">
        <text>S-ubiquitinyl-[E2 ubiquitin-conjugating enzyme]-L-cysteine + [acceptor protein]-L-lysine = [E2 ubiquitin-conjugating enzyme]-L-cysteine + N(6)-ubiquitinyl-[acceptor protein]-L-lysine.</text>
        <dbReference type="EC" id="2.3.2.27"/>
    </reaction>
</comment>
<comment type="pathway">
    <text evidence="1">Protein modification; protein ubiquitination.</text>
</comment>
<comment type="similarity">
    <text evidence="4">Belongs to the RNF181 family.</text>
</comment>
<evidence type="ECO:0000250" key="1">
    <source>
        <dbReference type="UniProtKB" id="Q9P0P0"/>
    </source>
</evidence>
<evidence type="ECO:0000255" key="2">
    <source>
        <dbReference type="PROSITE-ProRule" id="PRU00175"/>
    </source>
</evidence>
<evidence type="ECO:0000303" key="3">
    <source ref="1"/>
</evidence>
<evidence type="ECO:0000305" key="4"/>
<keyword id="KW-0479">Metal-binding</keyword>
<keyword id="KW-1185">Reference proteome</keyword>
<keyword id="KW-0808">Transferase</keyword>
<keyword id="KW-0833">Ubl conjugation pathway</keyword>
<keyword id="KW-0862">Zinc</keyword>
<keyword id="KW-0863">Zinc-finger</keyword>
<protein>
    <recommendedName>
        <fullName evidence="4">E3 ubiquitin-protein ligase RNF181</fullName>
        <ecNumber evidence="1">2.3.2.27</ecNumber>
    </recommendedName>
    <alternativeName>
        <fullName>RING finger protein 181</fullName>
    </alternativeName>
</protein>
<sequence>MASYFDEHNCEPTVPEEQYRQNALLELARSLLSGMDIDLGALDFTEWDQRLPPPAAKKVVESLPKVTVTPEQADAALKCPVCLLEFEEGETVRQLPCEHLFHSSCILPWLGKTNSCPLCRHELPTDSPEYEEYKQEKERRQQKEHRLECLHDAMYT</sequence>
<organism>
    <name type="scientific">Xenopus tropicalis</name>
    <name type="common">Western clawed frog</name>
    <name type="synonym">Silurana tropicalis</name>
    <dbReference type="NCBI Taxonomy" id="8364"/>
    <lineage>
        <taxon>Eukaryota</taxon>
        <taxon>Metazoa</taxon>
        <taxon>Chordata</taxon>
        <taxon>Craniata</taxon>
        <taxon>Vertebrata</taxon>
        <taxon>Euteleostomi</taxon>
        <taxon>Amphibia</taxon>
        <taxon>Batrachia</taxon>
        <taxon>Anura</taxon>
        <taxon>Pipoidea</taxon>
        <taxon>Pipidae</taxon>
        <taxon>Xenopodinae</taxon>
        <taxon>Xenopus</taxon>
        <taxon>Silurana</taxon>
    </lineage>
</organism>
<feature type="chain" id="PRO_0000295701" description="E3 ubiquitin-protein ligase RNF181">
    <location>
        <begin position="1"/>
        <end position="156"/>
    </location>
</feature>
<feature type="zinc finger region" description="RING-type; atypical" evidence="2">
    <location>
        <begin position="79"/>
        <end position="120"/>
    </location>
</feature>
<name>RN181_XENTR</name>
<proteinExistence type="evidence at transcript level"/>
<gene>
    <name type="primary">rnf181</name>
    <name evidence="3" type="ORF">TEgg007l03.1</name>
</gene>
<reference key="1">
    <citation type="submission" date="2006-10" db="EMBL/GenBank/DDBJ databases">
        <authorList>
            <consortium name="Sanger Xenopus tropicalis EST/cDNA project"/>
        </authorList>
    </citation>
    <scope>NUCLEOTIDE SEQUENCE [LARGE SCALE MRNA]</scope>
    <source>
        <tissue>Egg</tissue>
    </source>
</reference>
<reference key="2">
    <citation type="submission" date="2004-12" db="EMBL/GenBank/DDBJ databases">
        <authorList>
            <consortium name="NIH - Xenopus Gene Collection (XGC) project"/>
        </authorList>
    </citation>
    <scope>NUCLEOTIDE SEQUENCE [LARGE SCALE MRNA]</scope>
    <source>
        <tissue>Embryo</tissue>
    </source>
</reference>
<accession>Q5M974</accession>
<dbReference type="EC" id="2.3.2.27" evidence="1"/>
<dbReference type="EMBL" id="CR762012">
    <property type="protein sequence ID" value="CAJ81968.1"/>
    <property type="molecule type" value="mRNA"/>
</dbReference>
<dbReference type="EMBL" id="BC087570">
    <property type="protein sequence ID" value="AAH87570.1"/>
    <property type="molecule type" value="mRNA"/>
</dbReference>
<dbReference type="RefSeq" id="NP_001011200.1">
    <property type="nucleotide sequence ID" value="NM_001011200.2"/>
</dbReference>
<dbReference type="RefSeq" id="XP_012814375.1">
    <property type="nucleotide sequence ID" value="XM_012958921.3"/>
</dbReference>
<dbReference type="RefSeq" id="XP_012814377.1">
    <property type="nucleotide sequence ID" value="XM_012958923.3"/>
</dbReference>
<dbReference type="RefSeq" id="XP_012814378.1">
    <property type="nucleotide sequence ID" value="XM_012958924.3"/>
</dbReference>
<dbReference type="SMR" id="Q5M974"/>
<dbReference type="FunCoup" id="Q5M974">
    <property type="interactions" value="676"/>
</dbReference>
<dbReference type="STRING" id="8364.ENSXETP00000036932"/>
<dbReference type="PaxDb" id="8364-ENSXETP00000002719"/>
<dbReference type="DNASU" id="496625"/>
<dbReference type="GeneID" id="496625"/>
<dbReference type="KEGG" id="xtr:496625"/>
<dbReference type="AGR" id="Xenbase:XB-GENE-964051"/>
<dbReference type="CTD" id="51255"/>
<dbReference type="Xenbase" id="XB-GENE-964051">
    <property type="gene designation" value="rnf181"/>
</dbReference>
<dbReference type="eggNOG" id="KOG0800">
    <property type="taxonomic scope" value="Eukaryota"/>
</dbReference>
<dbReference type="HOGENOM" id="CLU_144247_0_0_1"/>
<dbReference type="InParanoid" id="Q5M974"/>
<dbReference type="OMA" id="EHLHGAM"/>
<dbReference type="OrthoDB" id="21204at2759"/>
<dbReference type="PhylomeDB" id="Q5M974"/>
<dbReference type="UniPathway" id="UPA00143"/>
<dbReference type="Proteomes" id="UP000008143">
    <property type="component" value="Chromosome 3"/>
</dbReference>
<dbReference type="GO" id="GO:0061630">
    <property type="term" value="F:ubiquitin protein ligase activity"/>
    <property type="evidence" value="ECO:0000250"/>
    <property type="project" value="UniProtKB"/>
</dbReference>
<dbReference type="GO" id="GO:0008270">
    <property type="term" value="F:zinc ion binding"/>
    <property type="evidence" value="ECO:0007669"/>
    <property type="project" value="UniProtKB-KW"/>
</dbReference>
<dbReference type="GO" id="GO:0016567">
    <property type="term" value="P:protein ubiquitination"/>
    <property type="evidence" value="ECO:0007669"/>
    <property type="project" value="UniProtKB-UniPathway"/>
</dbReference>
<dbReference type="CDD" id="cd16669">
    <property type="entry name" value="RING-H2_RNF181"/>
    <property type="match status" value="1"/>
</dbReference>
<dbReference type="FunFam" id="3.30.40.10:FF:000127">
    <property type="entry name" value="E3 ubiquitin-protein ligase RNF181"/>
    <property type="match status" value="1"/>
</dbReference>
<dbReference type="Gene3D" id="3.30.40.10">
    <property type="entry name" value="Zinc/RING finger domain, C3HC4 (zinc finger)"/>
    <property type="match status" value="1"/>
</dbReference>
<dbReference type="InterPro" id="IPR001841">
    <property type="entry name" value="Znf_RING"/>
</dbReference>
<dbReference type="InterPro" id="IPR013083">
    <property type="entry name" value="Znf_RING/FYVE/PHD"/>
</dbReference>
<dbReference type="PANTHER" id="PTHR15710">
    <property type="entry name" value="E3 UBIQUITIN-PROTEIN LIGASE PRAJA"/>
    <property type="match status" value="1"/>
</dbReference>
<dbReference type="PANTHER" id="PTHR15710:SF160">
    <property type="entry name" value="E3 UBIQUITIN-PROTEIN LIGASE RNF181"/>
    <property type="match status" value="1"/>
</dbReference>
<dbReference type="Pfam" id="PF13639">
    <property type="entry name" value="zf-RING_2"/>
    <property type="match status" value="1"/>
</dbReference>
<dbReference type="SMART" id="SM00184">
    <property type="entry name" value="RING"/>
    <property type="match status" value="1"/>
</dbReference>
<dbReference type="SUPFAM" id="SSF57850">
    <property type="entry name" value="RING/U-box"/>
    <property type="match status" value="1"/>
</dbReference>
<dbReference type="PROSITE" id="PS50089">
    <property type="entry name" value="ZF_RING_2"/>
    <property type="match status" value="1"/>
</dbReference>